<reference evidence="5" key="1">
    <citation type="journal article" date="2012" name="Syst. Biol.">
        <title>Peptidomics-based phylogeny and biogeography of Mantophasmatodea (Hexapoda).</title>
        <authorList>
            <person name="Predel R."/>
            <person name="Neupert S."/>
            <person name="Huetteroth W."/>
            <person name="Kahnt J."/>
            <person name="Waidelich D."/>
            <person name="Roth S."/>
        </authorList>
    </citation>
    <scope>PROTEIN SEQUENCE</scope>
    <scope>AMIDATION AT LEU-8</scope>
    <source>
        <tissue evidence="3">Corpora cardiaca</tissue>
    </source>
</reference>
<accession>B3A073</accession>
<name>PPK2_KARBI</name>
<evidence type="ECO:0000250" key="1">
    <source>
        <dbReference type="UniProtKB" id="P82619"/>
    </source>
</evidence>
<evidence type="ECO:0000255" key="2"/>
<evidence type="ECO:0000269" key="3">
    <source>
    </source>
</evidence>
<evidence type="ECO:0000303" key="4">
    <source>
    </source>
</evidence>
<evidence type="ECO:0000305" key="5"/>
<evidence type="ECO:0000305" key="6">
    <source>
    </source>
</evidence>
<organism>
    <name type="scientific">Karoophasma biedouwense</name>
    <name type="common">Gladiator</name>
    <name type="synonym">Heel-walker</name>
    <dbReference type="NCBI Taxonomy" id="253133"/>
    <lineage>
        <taxon>Eukaryota</taxon>
        <taxon>Metazoa</taxon>
        <taxon>Ecdysozoa</taxon>
        <taxon>Arthropoda</taxon>
        <taxon>Hexapoda</taxon>
        <taxon>Insecta</taxon>
        <taxon>Pterygota</taxon>
        <taxon>Neoptera</taxon>
        <taxon>Polyneoptera</taxon>
        <taxon>Mantophasmatodea</taxon>
        <taxon>Austrophasmatidae</taxon>
        <taxon>Karoophasma</taxon>
    </lineage>
</organism>
<proteinExistence type="evidence at protein level"/>
<keyword id="KW-0027">Amidation</keyword>
<keyword id="KW-0903">Direct protein sequencing</keyword>
<keyword id="KW-0527">Neuropeptide</keyword>
<keyword id="KW-0964">Secreted</keyword>
<sequence>SPPFAPRL</sequence>
<protein>
    <recommendedName>
        <fullName evidence="4">Pyrokinin-2</fullName>
        <shortName evidence="4">PK-2</shortName>
    </recommendedName>
    <alternativeName>
        <fullName evidence="1">FXPRL-amide</fullName>
    </alternativeName>
</protein>
<dbReference type="GO" id="GO:0005576">
    <property type="term" value="C:extracellular region"/>
    <property type="evidence" value="ECO:0007669"/>
    <property type="project" value="UniProtKB-SubCell"/>
</dbReference>
<dbReference type="GO" id="GO:0007218">
    <property type="term" value="P:neuropeptide signaling pathway"/>
    <property type="evidence" value="ECO:0007669"/>
    <property type="project" value="UniProtKB-KW"/>
</dbReference>
<comment type="function">
    <text evidence="1">Myoactive.</text>
</comment>
<comment type="subcellular location">
    <subcellularLocation>
        <location evidence="6">Secreted</location>
    </subcellularLocation>
</comment>
<comment type="similarity">
    <text evidence="2">Belongs to the pyrokinin family.</text>
</comment>
<feature type="peptide" id="PRO_0000421586" description="Pyrokinin-2" evidence="3">
    <location>
        <begin position="1"/>
        <end position="8"/>
    </location>
</feature>
<feature type="modified residue" description="Leucine amide" evidence="3">
    <location>
        <position position="8"/>
    </location>
</feature>